<dbReference type="EMBL" id="CP000886">
    <property type="protein sequence ID" value="ABX67998.1"/>
    <property type="molecule type" value="Genomic_DNA"/>
</dbReference>
<dbReference type="RefSeq" id="WP_001024853.1">
    <property type="nucleotide sequence ID" value="NC_010102.1"/>
</dbReference>
<dbReference type="SMR" id="A9MSN4"/>
<dbReference type="KEGG" id="spq:SPAB_02619"/>
<dbReference type="PATRIC" id="fig|1016998.12.peg.2478"/>
<dbReference type="HOGENOM" id="CLU_035023_2_2_6"/>
<dbReference type="BioCyc" id="SENT1016998:SPAB_RS10665-MONOMER"/>
<dbReference type="Proteomes" id="UP000008556">
    <property type="component" value="Chromosome"/>
</dbReference>
<dbReference type="GO" id="GO:0005886">
    <property type="term" value="C:plasma membrane"/>
    <property type="evidence" value="ECO:0007669"/>
    <property type="project" value="UniProtKB-SubCell"/>
</dbReference>
<dbReference type="GO" id="GO:0008324">
    <property type="term" value="F:monoatomic cation transmembrane transporter activity"/>
    <property type="evidence" value="ECO:0007669"/>
    <property type="project" value="InterPro"/>
</dbReference>
<dbReference type="GO" id="GO:0006813">
    <property type="term" value="P:potassium ion transport"/>
    <property type="evidence" value="ECO:0007669"/>
    <property type="project" value="InterPro"/>
</dbReference>
<dbReference type="FunFam" id="3.30.70.1450:FF:000003">
    <property type="entry name" value="Putative transport protein YbjL"/>
    <property type="match status" value="1"/>
</dbReference>
<dbReference type="Gene3D" id="3.30.70.1450">
    <property type="entry name" value="Regulator of K+ conductance, C-terminal domain"/>
    <property type="match status" value="1"/>
</dbReference>
<dbReference type="HAMAP" id="MF_01015">
    <property type="entry name" value="YbjL"/>
    <property type="match status" value="1"/>
</dbReference>
<dbReference type="InterPro" id="IPR050144">
    <property type="entry name" value="AAE_transporter"/>
</dbReference>
<dbReference type="InterPro" id="IPR006037">
    <property type="entry name" value="RCK_C"/>
</dbReference>
<dbReference type="InterPro" id="IPR036721">
    <property type="entry name" value="RCK_C_sf"/>
</dbReference>
<dbReference type="InterPro" id="IPR023017">
    <property type="entry name" value="Transp_YbjL_put"/>
</dbReference>
<dbReference type="InterPro" id="IPR006512">
    <property type="entry name" value="YidE_YbjL"/>
</dbReference>
<dbReference type="NCBIfam" id="NF003440">
    <property type="entry name" value="PRK04972.1"/>
    <property type="match status" value="1"/>
</dbReference>
<dbReference type="NCBIfam" id="TIGR01625">
    <property type="entry name" value="YidE_YbjL_dupl"/>
    <property type="match status" value="2"/>
</dbReference>
<dbReference type="PANTHER" id="PTHR30445">
    <property type="entry name" value="K(+)_H(+) ANTIPORTER SUBUNIT KHTT"/>
    <property type="match status" value="1"/>
</dbReference>
<dbReference type="PANTHER" id="PTHR30445:SF10">
    <property type="entry name" value="TRANSPORT PROTEIN YBJL-RELATED"/>
    <property type="match status" value="1"/>
</dbReference>
<dbReference type="Pfam" id="PF06826">
    <property type="entry name" value="Asp-Al_Ex"/>
    <property type="match status" value="2"/>
</dbReference>
<dbReference type="Pfam" id="PF02080">
    <property type="entry name" value="TrkA_C"/>
    <property type="match status" value="2"/>
</dbReference>
<dbReference type="SUPFAM" id="SSF116726">
    <property type="entry name" value="TrkA C-terminal domain-like"/>
    <property type="match status" value="2"/>
</dbReference>
<dbReference type="PROSITE" id="PS51202">
    <property type="entry name" value="RCK_C"/>
    <property type="match status" value="2"/>
</dbReference>
<sequence>MNINVADLLNGNYILLLFVVLALGLCLGKLRLGSVQLGNSIGVLVVSLLLGQQHFSINTDALNLGFMLFIFCVGVEAGPNFFSIFFRDGKNYLMLALVMVGSALLIALGLGKLFGWDIGLTAGMLAGSMTSTPVLVGAGDTLRHSGIASTQLSSALDNLSLGYALTYLIGLVSLIVGARYLPKLQHQDLQTSAQQIARERGLDTDANRKVYLPVIRAYRVGPELVAWTDGKNLRELGIYRQTGCYIERIRRNGILANPDGDAVLQMGDEIALVGYPDAHARLDPSFRNGKEVFDRDLLDMRIVTEEIVVKNHNAVGRRLAQLKLTDHGCFLNRVIRSQIEMPIDDNVVLNKGDVLQVSGDARRVKTIADRIGFISIHSQVTDLLAFCAFFIIGLMIGMITFQFSNFSFGIGNAAGLLFAGIMLGFLRANHPTFGYIPQGALNMVKEFGLMVFMAGVGLSAGSGISNGLGAVGGQMLIAGLVVSLVPVVICFLFGAYVLRMNRALLFGAMMGARTCAPAMEIISDTARSNIPALGYAGTYAIANVLLTLAGTLIVIIWPGLG</sequence>
<reference key="1">
    <citation type="submission" date="2007-11" db="EMBL/GenBank/DDBJ databases">
        <authorList>
            <consortium name="The Salmonella enterica serovar Paratyphi B Genome Sequencing Project"/>
            <person name="McClelland M."/>
            <person name="Sanderson E.K."/>
            <person name="Porwollik S."/>
            <person name="Spieth J."/>
            <person name="Clifton W.S."/>
            <person name="Fulton R."/>
            <person name="Cordes M."/>
            <person name="Wollam A."/>
            <person name="Shah N."/>
            <person name="Pepin K."/>
            <person name="Bhonagiri V."/>
            <person name="Nash W."/>
            <person name="Johnson M."/>
            <person name="Thiruvilangam P."/>
            <person name="Wilson R."/>
        </authorList>
    </citation>
    <scope>NUCLEOTIDE SEQUENCE [LARGE SCALE GENOMIC DNA]</scope>
    <source>
        <strain>ATCC BAA-1250 / SPB7</strain>
    </source>
</reference>
<gene>
    <name evidence="1" type="primary">ybjL</name>
    <name type="ordered locus">SPAB_02619</name>
</gene>
<proteinExistence type="inferred from homology"/>
<protein>
    <recommendedName>
        <fullName evidence="1">Putative transport protein YbjL</fullName>
    </recommendedName>
</protein>
<accession>A9MSN4</accession>
<evidence type="ECO:0000255" key="1">
    <source>
        <dbReference type="HAMAP-Rule" id="MF_01015"/>
    </source>
</evidence>
<comment type="subcellular location">
    <subcellularLocation>
        <location evidence="1">Cell membrane</location>
        <topology evidence="1">Multi-pass membrane protein</topology>
    </subcellularLocation>
</comment>
<comment type="similarity">
    <text evidence="1">Belongs to the AAE transporter (TC 2.A.81) family. YbjL subfamily.</text>
</comment>
<feature type="chain" id="PRO_1000084122" description="Putative transport protein YbjL">
    <location>
        <begin position="1"/>
        <end position="561"/>
    </location>
</feature>
<feature type="transmembrane region" description="Helical" evidence="1">
    <location>
        <begin position="8"/>
        <end position="28"/>
    </location>
</feature>
<feature type="transmembrane region" description="Helical" evidence="1">
    <location>
        <begin position="32"/>
        <end position="52"/>
    </location>
</feature>
<feature type="transmembrane region" description="Helical" evidence="1">
    <location>
        <begin position="66"/>
        <end position="86"/>
    </location>
</feature>
<feature type="transmembrane region" description="Helical" evidence="1">
    <location>
        <begin position="94"/>
        <end position="114"/>
    </location>
</feature>
<feature type="transmembrane region" description="Helical" evidence="1">
    <location>
        <begin position="158"/>
        <end position="178"/>
    </location>
</feature>
<feature type="transmembrane region" description="Helical" evidence="1">
    <location>
        <begin position="383"/>
        <end position="403"/>
    </location>
</feature>
<feature type="transmembrane region" description="Helical" evidence="1">
    <location>
        <begin position="406"/>
        <end position="426"/>
    </location>
</feature>
<feature type="transmembrane region" description="Helical" evidence="1">
    <location>
        <begin position="447"/>
        <end position="467"/>
    </location>
</feature>
<feature type="transmembrane region" description="Helical" evidence="1">
    <location>
        <begin position="475"/>
        <end position="495"/>
    </location>
</feature>
<feature type="transmembrane region" description="Helical" evidence="1">
    <location>
        <begin position="540"/>
        <end position="560"/>
    </location>
</feature>
<feature type="domain" description="RCK C-terminal 1" evidence="1">
    <location>
        <begin position="200"/>
        <end position="288"/>
    </location>
</feature>
<feature type="domain" description="RCK C-terminal 2" evidence="1">
    <location>
        <begin position="292"/>
        <end position="373"/>
    </location>
</feature>
<keyword id="KW-1003">Cell membrane</keyword>
<keyword id="KW-0472">Membrane</keyword>
<keyword id="KW-0677">Repeat</keyword>
<keyword id="KW-0812">Transmembrane</keyword>
<keyword id="KW-1133">Transmembrane helix</keyword>
<keyword id="KW-0813">Transport</keyword>
<organism>
    <name type="scientific">Salmonella paratyphi B (strain ATCC BAA-1250 / SPB7)</name>
    <dbReference type="NCBI Taxonomy" id="1016998"/>
    <lineage>
        <taxon>Bacteria</taxon>
        <taxon>Pseudomonadati</taxon>
        <taxon>Pseudomonadota</taxon>
        <taxon>Gammaproteobacteria</taxon>
        <taxon>Enterobacterales</taxon>
        <taxon>Enterobacteriaceae</taxon>
        <taxon>Salmonella</taxon>
    </lineage>
</organism>
<name>YBJL_SALPB</name>